<dbReference type="EC" id="3.4.22.-" evidence="1"/>
<dbReference type="SMR" id="P32954"/>
<dbReference type="MEROPS" id="C01.019"/>
<dbReference type="GO" id="GO:0008234">
    <property type="term" value="F:cysteine-type peptidase activity"/>
    <property type="evidence" value="ECO:0007669"/>
    <property type="project" value="UniProtKB-KW"/>
</dbReference>
<dbReference type="GO" id="GO:0006508">
    <property type="term" value="P:proteolysis"/>
    <property type="evidence" value="ECO:0007669"/>
    <property type="project" value="UniProtKB-KW"/>
</dbReference>
<dbReference type="Gene3D" id="3.90.70.10">
    <property type="entry name" value="Cysteine proteinases"/>
    <property type="match status" value="1"/>
</dbReference>
<dbReference type="InterPro" id="IPR038765">
    <property type="entry name" value="Papain-like_cys_pep_sf"/>
</dbReference>
<dbReference type="InterPro" id="IPR000169">
    <property type="entry name" value="Pept_cys_AS"/>
</dbReference>
<dbReference type="InterPro" id="IPR013128">
    <property type="entry name" value="Peptidase_C1A"/>
</dbReference>
<dbReference type="InterPro" id="IPR000668">
    <property type="entry name" value="Peptidase_C1A_C"/>
</dbReference>
<dbReference type="PANTHER" id="PTHR12411">
    <property type="entry name" value="CYSTEINE PROTEASE FAMILY C1-RELATED"/>
    <property type="match status" value="1"/>
</dbReference>
<dbReference type="Pfam" id="PF00112">
    <property type="entry name" value="Peptidase_C1"/>
    <property type="match status" value="1"/>
</dbReference>
<dbReference type="SUPFAM" id="SSF54001">
    <property type="entry name" value="Cysteine proteinases"/>
    <property type="match status" value="1"/>
</dbReference>
<dbReference type="PROSITE" id="PS00139">
    <property type="entry name" value="THIOL_PROTEASE_CYS"/>
    <property type="match status" value="1"/>
</dbReference>
<sequence length="43" mass="4550">IVASIDWRQKGAVTPVRNQGSCGSCWTFSSVAAVEGIIKIRGT</sequence>
<proteinExistence type="evidence at protein level"/>
<organism>
    <name type="scientific">Vasconcellea cundinamarcensis</name>
    <name type="common">Mountain papaya</name>
    <name type="synonym">Carica candamarcensis</name>
    <dbReference type="NCBI Taxonomy" id="35926"/>
    <lineage>
        <taxon>Eukaryota</taxon>
        <taxon>Viridiplantae</taxon>
        <taxon>Streptophyta</taxon>
        <taxon>Embryophyta</taxon>
        <taxon>Tracheophyta</taxon>
        <taxon>Spermatophyta</taxon>
        <taxon>Magnoliopsida</taxon>
        <taxon>eudicotyledons</taxon>
        <taxon>Gunneridae</taxon>
        <taxon>Pentapetalae</taxon>
        <taxon>rosids</taxon>
        <taxon>malvids</taxon>
        <taxon>Brassicales</taxon>
        <taxon>Caricaceae</taxon>
        <taxon>Vasconcellea</taxon>
    </lineage>
</organism>
<accession>P32954</accession>
<protein>
    <recommendedName>
        <fullName>Cysteine proteinase 1</fullName>
        <ecNumber evidence="1">3.4.22.-</ecNumber>
    </recommendedName>
    <alternativeName>
        <fullName>CC-I</fullName>
    </alternativeName>
    <alternativeName>
        <fullName>Cysteine proteinase I</fullName>
    </alternativeName>
</protein>
<keyword id="KW-0903">Direct protein sequencing</keyword>
<keyword id="KW-0378">Hydrolase</keyword>
<keyword id="KW-0645">Protease</keyword>
<keyword id="KW-0732">Signal</keyword>
<keyword id="KW-0788">Thiol protease</keyword>
<feature type="signal peptide" evidence="2">
    <location>
        <begin position="1"/>
        <end status="unknown"/>
    </location>
</feature>
<feature type="chain" id="PRO_0000050564" description="Cysteine proteinase 1">
    <location>
        <begin status="unknown"/>
        <end position="43" status="greater than"/>
    </location>
</feature>
<feature type="active site" evidence="3">
    <location>
        <position position="25"/>
    </location>
</feature>
<feature type="non-terminal residue">
    <location>
        <position position="43"/>
    </location>
</feature>
<name>CYSP1_VASCU</name>
<comment type="similarity">
    <text evidence="3 4 5">Belongs to the peptidase C1 family.</text>
</comment>
<evidence type="ECO:0000250" key="1">
    <source>
        <dbReference type="UniProtKB" id="P80884"/>
    </source>
</evidence>
<evidence type="ECO:0000255" key="2"/>
<evidence type="ECO:0000255" key="3">
    <source>
        <dbReference type="PROSITE-ProRule" id="PRU10088"/>
    </source>
</evidence>
<evidence type="ECO:0000255" key="4">
    <source>
        <dbReference type="PROSITE-ProRule" id="PRU10089"/>
    </source>
</evidence>
<evidence type="ECO:0000255" key="5">
    <source>
        <dbReference type="PROSITE-ProRule" id="PRU10090"/>
    </source>
</evidence>
<reference key="1">
    <citation type="journal article" date="1993" name="Biol. Chem. Hoppe-Seyler">
        <title>Isolation and preliminary characterization of the cysteine-proteinases from the latex of Carica candamarcensis Hook.</title>
        <authorList>
            <person name="Walreavens V."/>
            <person name="Jaziri M."/>
            <person name="van Beeumen J."/>
            <person name="Schnek A.G."/>
            <person name="Kleinschmidt T."/>
            <person name="Looze Y."/>
        </authorList>
    </citation>
    <scope>PROTEIN SEQUENCE</scope>
    <source>
        <tissue>Latex</tissue>
    </source>
</reference>